<proteinExistence type="evidence at transcript level"/>
<reference key="1">
    <citation type="journal article" date="2005" name="Proteins">
        <title>A novel strategy for the identification of toxinlike structures in spider venom.</title>
        <authorList>
            <person name="Kozlov S.A."/>
            <person name="Malyavka A."/>
            <person name="McCutchen B."/>
            <person name="Lu A."/>
            <person name="Schepers E."/>
            <person name="Herrmann R."/>
            <person name="Grishin E.V."/>
        </authorList>
    </citation>
    <scope>NUCLEOTIDE SEQUENCE [MRNA]</scope>
    <source>
        <tissue>Venom gland</tissue>
    </source>
</reference>
<organism>
    <name type="scientific">Agelena orientalis</name>
    <name type="common">Funnel-web spider</name>
    <dbReference type="NCBI Taxonomy" id="293813"/>
    <lineage>
        <taxon>Eukaryota</taxon>
        <taxon>Metazoa</taxon>
        <taxon>Ecdysozoa</taxon>
        <taxon>Arthropoda</taxon>
        <taxon>Chelicerata</taxon>
        <taxon>Arachnida</taxon>
        <taxon>Araneae</taxon>
        <taxon>Araneomorphae</taxon>
        <taxon>Entelegynae</taxon>
        <taxon>Agelenidae</taxon>
        <taxon>Agelena</taxon>
    </lineage>
</organism>
<keyword id="KW-0027">Amidation</keyword>
<keyword id="KW-1015">Disulfide bond</keyword>
<keyword id="KW-0960">Knottin</keyword>
<keyword id="KW-0528">Neurotoxin</keyword>
<keyword id="KW-0964">Secreted</keyword>
<keyword id="KW-0732">Signal</keyword>
<keyword id="KW-0800">Toxin</keyword>
<dbReference type="EMBL" id="AY681311">
    <property type="protein sequence ID" value="AAU93669.1"/>
    <property type="molecule type" value="mRNA"/>
</dbReference>
<dbReference type="SMR" id="Q5Y4X1"/>
<dbReference type="ArachnoServer" id="AS000099">
    <property type="toxin name" value="U2-agatoxin-Ao1o"/>
</dbReference>
<dbReference type="GO" id="GO:0005576">
    <property type="term" value="C:extracellular region"/>
    <property type="evidence" value="ECO:0007669"/>
    <property type="project" value="UniProtKB-SubCell"/>
</dbReference>
<dbReference type="GO" id="GO:0090729">
    <property type="term" value="F:toxin activity"/>
    <property type="evidence" value="ECO:0007669"/>
    <property type="project" value="UniProtKB-KW"/>
</dbReference>
<dbReference type="Pfam" id="PF05980">
    <property type="entry name" value="Toxin_7"/>
    <property type="match status" value="1"/>
</dbReference>
<dbReference type="SUPFAM" id="SSF57059">
    <property type="entry name" value="omega toxin-like"/>
    <property type="match status" value="1"/>
</dbReference>
<sequence length="69" mass="7739">MKAIISLLLISAMVFSMFEAVPVRRRFTAFEGERGCLPHNRFCNALSGPRCCTGLKCKELSIWDSRCLG</sequence>
<accession>Q5Y4X1</accession>
<feature type="signal peptide" evidence="2">
    <location>
        <begin position="1"/>
        <end position="20"/>
    </location>
</feature>
<feature type="propeptide" id="PRO_5000093629" evidence="2">
    <location>
        <begin position="21"/>
        <end position="34"/>
    </location>
</feature>
<feature type="chain" id="PRO_5000093630" description="U2-agatoxin-Ao1o">
    <location>
        <begin position="35"/>
        <end position="68"/>
    </location>
</feature>
<feature type="modified residue" description="Leucine amide" evidence="1">
    <location>
        <position position="68"/>
    </location>
</feature>
<feature type="disulfide bond" evidence="1">
    <location>
        <begin position="36"/>
        <end position="52"/>
    </location>
</feature>
<feature type="disulfide bond" evidence="1">
    <location>
        <begin position="43"/>
        <end position="57"/>
    </location>
</feature>
<feature type="disulfide bond" evidence="1">
    <location>
        <begin position="51"/>
        <end position="67"/>
    </location>
</feature>
<name>TAG2O_AGEOR</name>
<evidence type="ECO:0000250" key="1"/>
<evidence type="ECO:0000255" key="2"/>
<evidence type="ECO:0000305" key="3"/>
<protein>
    <recommendedName>
        <fullName>U2-agatoxin-Ao1o</fullName>
        <shortName>U2-AGTX-Ao1o</shortName>
    </recommendedName>
    <alternativeName>
        <fullName>Toxin-like structure Agel_14</fullName>
    </alternativeName>
</protein>
<comment type="function">
    <text evidence="1">Insect active toxin causing rapid but reversible paralysis in crickets. No activity shown in mammals. Does not show effect on mammalian voltage-gated calcium channels (By similarity).</text>
</comment>
<comment type="subcellular location">
    <subcellularLocation>
        <location evidence="1">Secreted</location>
    </subcellularLocation>
</comment>
<comment type="tissue specificity">
    <text>Expressed by the venom gland.</text>
</comment>
<comment type="domain">
    <text evidence="1">The presence of a 'disulfide through disulfide knot' structurally defines this protein as a knottin.</text>
</comment>
<comment type="similarity">
    <text evidence="3">Belongs to the neurotoxin 01 (U2-agtx) family.</text>
</comment>